<proteinExistence type="evidence at protein level"/>
<evidence type="ECO:0000250" key="1"/>
<evidence type="ECO:0000250" key="2">
    <source>
        <dbReference type="UniProtKB" id="Q9H2X6"/>
    </source>
</evidence>
<evidence type="ECO:0000250" key="3">
    <source>
        <dbReference type="UniProtKB" id="Q9QZR5"/>
    </source>
</evidence>
<evidence type="ECO:0000255" key="4">
    <source>
        <dbReference type="PROSITE-ProRule" id="PRU00159"/>
    </source>
</evidence>
<evidence type="ECO:0000256" key="5">
    <source>
        <dbReference type="SAM" id="MobiDB-lite"/>
    </source>
</evidence>
<evidence type="ECO:0000269" key="6">
    <source>
    </source>
</evidence>
<evidence type="ECO:0000269" key="7">
    <source>
    </source>
</evidence>
<evidence type="ECO:0000269" key="8">
    <source>
    </source>
</evidence>
<evidence type="ECO:0000305" key="9"/>
<feature type="chain" id="PRO_0000085996" description="Homeodomain-interacting protein kinase 2">
    <location>
        <begin position="1"/>
        <end position="1168"/>
    </location>
</feature>
<feature type="domain" description="Protein kinase" evidence="4">
    <location>
        <begin position="199"/>
        <end position="527"/>
    </location>
</feature>
<feature type="region of interest" description="Transcriptional corepression" evidence="1">
    <location>
        <begin position="97"/>
        <end position="230"/>
    </location>
</feature>
<feature type="region of interest" description="Interaction with DAXX" evidence="1">
    <location>
        <begin position="189"/>
        <end position="520"/>
    </location>
</feature>
<feature type="region of interest" description="Interaction with SKI and SMAD1" evidence="1">
    <location>
        <begin position="539"/>
        <end position="816"/>
    </location>
</feature>
<feature type="region of interest" description="Interaction with DAZAP2" evidence="2">
    <location>
        <begin position="595"/>
        <end position="772"/>
    </location>
</feature>
<feature type="region of interest" description="Interaction with POU4F1" evidence="1">
    <location>
        <begin position="724"/>
        <end position="869"/>
    </location>
</feature>
<feature type="region of interest" description="Interaction with CTBP1" evidence="1">
    <location>
        <begin position="746"/>
        <end position="848"/>
    </location>
</feature>
<feature type="region of interest" description="Interaction with HMGA1" evidence="1">
    <location>
        <begin position="759"/>
        <end position="869"/>
    </location>
</feature>
<feature type="region of interest" description="Disordered" evidence="5">
    <location>
        <begin position="764"/>
        <end position="820"/>
    </location>
</feature>
<feature type="region of interest" description="Interaction with TP53 and TP73" evidence="7">
    <location>
        <begin position="812"/>
        <end position="907"/>
    </location>
</feature>
<feature type="region of interest" description="Localization to nuclear speckles" evidence="1">
    <location>
        <begin position="845"/>
        <end position="952"/>
    </location>
</feature>
<feature type="region of interest" description="Required for localization to nuclear speckles" evidence="1">
    <location>
        <begin position="845"/>
        <end position="952"/>
    </location>
</feature>
<feature type="region of interest" description="Interaction with UBE2I" evidence="1">
    <location>
        <begin position="845"/>
        <end position="879"/>
    </location>
</feature>
<feature type="region of interest" description="Interaction with UBL1" evidence="8">
    <location>
        <begin position="854"/>
        <end position="876"/>
    </location>
</feature>
<feature type="region of interest" description="SUMO interaction motifs (SIM); required for nuclear localization and kinase activity" evidence="1">
    <location>
        <begin position="856"/>
        <end position="880"/>
    </location>
</feature>
<feature type="region of interest" description="Disordered" evidence="5">
    <location>
        <begin position="894"/>
        <end position="936"/>
    </location>
</feature>
<feature type="region of interest" description="Interaction with AXIN1" evidence="1">
    <location>
        <begin position="907"/>
        <end position="1022"/>
    </location>
</feature>
<feature type="region of interest" description="Autoinhibitory domain (AID)" evidence="1">
    <location>
        <begin position="956"/>
        <end position="1168"/>
    </location>
</feature>
<feature type="region of interest" description="Disordered" evidence="5">
    <location>
        <begin position="960"/>
        <end position="1030"/>
    </location>
</feature>
<feature type="short sequence motif" description="Nuclear localization signal 1 (NLS1)" evidence="1">
    <location>
        <begin position="774"/>
        <end position="777"/>
    </location>
</feature>
<feature type="short sequence motif" description="Nuclear localization signal 2 (NLS2)" evidence="1">
    <location>
        <begin position="804"/>
        <end position="807"/>
    </location>
</feature>
<feature type="compositionally biased region" description="Polar residues" evidence="5">
    <location>
        <begin position="765"/>
        <end position="791"/>
    </location>
</feature>
<feature type="compositionally biased region" description="Low complexity" evidence="5">
    <location>
        <begin position="792"/>
        <end position="801"/>
    </location>
</feature>
<feature type="compositionally biased region" description="Low complexity" evidence="5">
    <location>
        <begin position="895"/>
        <end position="909"/>
    </location>
</feature>
<feature type="compositionally biased region" description="Polar residues" evidence="5">
    <location>
        <begin position="910"/>
        <end position="923"/>
    </location>
</feature>
<feature type="compositionally biased region" description="Low complexity" evidence="5">
    <location>
        <begin position="965"/>
        <end position="991"/>
    </location>
</feature>
<feature type="compositionally biased region" description="Low complexity" evidence="5">
    <location>
        <begin position="998"/>
        <end position="1018"/>
    </location>
</feature>
<feature type="active site" description="Proton acceptor" evidence="9">
    <location>
        <position position="324"/>
    </location>
</feature>
<feature type="binding site" evidence="9">
    <location>
        <begin position="205"/>
        <end position="213"/>
    </location>
    <ligand>
        <name>ATP</name>
        <dbReference type="ChEBI" id="CHEBI:30616"/>
    </ligand>
</feature>
<feature type="binding site" evidence="9">
    <location>
        <position position="228"/>
    </location>
    <ligand>
        <name>ATP</name>
        <dbReference type="ChEBI" id="CHEBI:30616"/>
    </ligand>
</feature>
<feature type="site" description="Cleavage; by CASP6" evidence="1">
    <location>
        <begin position="895"/>
        <end position="896"/>
    </location>
</feature>
<feature type="site" description="Cleavage; by CASP6" evidence="1">
    <location>
        <begin position="956"/>
        <end position="957"/>
    </location>
</feature>
<feature type="modified residue" description="Phosphoserine" evidence="3">
    <location>
        <position position="16"/>
    </location>
</feature>
<feature type="modified residue" description="Phosphoserine" evidence="3">
    <location>
        <position position="118"/>
    </location>
</feature>
<feature type="modified residue" description="Phosphoserine" evidence="3">
    <location>
        <position position="135"/>
    </location>
</feature>
<feature type="modified residue" description="Phosphothreonine" evidence="3">
    <location>
        <position position="141"/>
    </location>
</feature>
<feature type="modified residue" description="Phosphothreonine" evidence="3">
    <location>
        <position position="252"/>
    </location>
</feature>
<feature type="modified residue" description="Phosphothreonine" evidence="3">
    <location>
        <position position="273"/>
    </location>
</feature>
<feature type="modified residue" description="Phosphotyrosine" evidence="3">
    <location>
        <position position="361"/>
    </location>
</feature>
<feature type="modified residue" description="Phosphoserine" evidence="3">
    <location>
        <position position="441"/>
    </location>
</feature>
<feature type="modified residue" description="Phosphothreonine" evidence="3">
    <location>
        <position position="482"/>
    </location>
</feature>
<feature type="modified residue" description="Phosphothreonine" evidence="3">
    <location>
        <position position="517"/>
    </location>
</feature>
<feature type="modified residue" description="Phosphothreonine" evidence="3">
    <location>
        <position position="566"/>
    </location>
</feature>
<feature type="modified residue" description="Phosphoserine" evidence="3">
    <location>
        <position position="607"/>
    </location>
</feature>
<feature type="modified residue" description="Phosphoserine" evidence="3">
    <location>
        <position position="641"/>
    </location>
</feature>
<feature type="modified residue" description="Phosphothreonine" evidence="3">
    <location>
        <position position="660"/>
    </location>
</feature>
<feature type="modified residue" description="Phosphoserine" evidence="3">
    <location>
        <position position="787"/>
    </location>
</feature>
<feature type="modified residue" description="Phosphoserine" evidence="3">
    <location>
        <position position="799"/>
    </location>
</feature>
<feature type="modified residue" description="Phosphoserine" evidence="3">
    <location>
        <position position="906"/>
    </location>
</feature>
<feature type="modified residue" description="Phosphoserine" evidence="3">
    <location>
        <position position="963"/>
    </location>
</feature>
<feature type="modified residue" description="Phosphoserine" evidence="3">
    <location>
        <position position="1014"/>
    </location>
</feature>
<feature type="modified residue" description="Phosphoserine" evidence="3">
    <location>
        <position position="1125"/>
    </location>
</feature>
<feature type="modified residue" description="Phosphoserine" evidence="3">
    <location>
        <position position="1158"/>
    </location>
</feature>
<feature type="cross-link" description="Glycyl lysine isopeptide (Lys-Gly) (interchain with G-Cter in SUMO); alternate" evidence="1">
    <location>
        <position position="32"/>
    </location>
</feature>
<feature type="cross-link" description="Glycyl lysine isopeptide (Lys-Gly) (interchain with G-Cter in SUMO2); alternate" evidence="2">
    <location>
        <position position="32"/>
    </location>
</feature>
<feature type="cross-link" description="Glycyl lysine isopeptide (Lys-Gly) (interchain with G-Cter in SUMO2)" evidence="2">
    <location>
        <position position="925"/>
    </location>
</feature>
<feature type="cross-link" description="Glycyl lysine isopeptide (Lys-Gly) (interchain with G-Cter in SUMO2)" evidence="2">
    <location>
        <position position="945"/>
    </location>
</feature>
<feature type="cross-link" description="Glycyl lysine isopeptide (Lys-Gly) (interchain with G-Cter in SUMO)" evidence="1">
    <location>
        <position position="1161"/>
    </location>
</feature>
<feature type="mutagenesis site" description="Abolishes enzymatic activity. Diffuse nuclear staining." evidence="6 8">
    <original>K</original>
    <variation>W</variation>
    <location>
        <position position="228"/>
    </location>
</feature>
<keyword id="KW-0053">Apoptosis</keyword>
<keyword id="KW-0067">ATP-binding</keyword>
<keyword id="KW-0963">Cytoplasm</keyword>
<keyword id="KW-0227">DNA damage</keyword>
<keyword id="KW-1017">Isopeptide bond</keyword>
<keyword id="KW-0418">Kinase</keyword>
<keyword id="KW-0547">Nucleotide-binding</keyword>
<keyword id="KW-0539">Nucleus</keyword>
<keyword id="KW-0597">Phosphoprotein</keyword>
<keyword id="KW-1185">Reference proteome</keyword>
<keyword id="KW-0723">Serine/threonine-protein kinase</keyword>
<keyword id="KW-0804">Transcription</keyword>
<keyword id="KW-0805">Transcription regulation</keyword>
<keyword id="KW-0808">Transferase</keyword>
<keyword id="KW-0043">Tumor suppressor</keyword>
<keyword id="KW-0832">Ubl conjugation</keyword>
<comment type="function">
    <text evidence="1 2 7 8">Serine/threonine-protein kinase involved in transcription regulation, p53/TP53-mediated cellular apoptosis and regulation of the cell cycle. Acts as a corepressor of several transcription factors, including SMAD1 and POU4F1/Brn3a and probably NK homeodomain transcription factors. Phosphorylates PDX1, ATF1, PML, p53/TP53, CREB1, CTBP1, CBX4, RUNX1, EP300, CTNNB1, HMGA1, ZBTB4 and DAZAP2. Inhibits cell growth and promotes apoptosis through the activation of p53/TP53 both at the transcription level and at the protein level (by phosphorylation and indirect acetylation). The phosphorylation of p53/TP53 may be mediated by a p53/TP53-HIPK2-AXIN1 complex. Involved in the response to hypoxia by acting as a transcriptional co-suppressor of HIF1A. Mediates transcriptional activation of TP73. In response to TGFB, cooperates with DAXX to activate JNK. Negative regulator through phosphorylation and subsequent proteasomal degradation of CTNNB1 and the antiapoptotic factor CTBP1. In the Wnt/beta-catenin signaling pathway acts as an intermediate kinase between MAP3K7/TAK1 and NLK to promote the proteasomal degradation of MYB. Phosphorylates CBX4 upon DNA damage and promotes its E3 SUMO-protein ligase activity. Activates CREB1 and ATF1 transcription factors by phosphorylation in response to genotoxic stress. In response to DNA damage, stabilizes PML by phosphorylation. PML, HIPK2 and FBXO3 may act synergically to activate p53/TP53-dependent transactivation. Promotes angiogenesis, and is involved in erythroid differentiation, especially during fetal liver erythropoiesis. Phosphorylation of RUNX1 and EP300 stimulates EP300 transcription regulation activity. Triggers ZBTB4 protein degradation in response to DNA damage. In response to DNA damage, phosphorylates DAZAP2 which localizes DAZAP2 to the nucleus, reduces interaction of DAZAP2 with HIPK2 and prevents DAZAP2-dependent ubiquitination of HIPK2 by E3 ubiquitin-protein ligase SIAH1 and subsequent proteasomal degradation (By similarity). Modulates HMGA1 DNA-binding affinity. In response to high glucose, triggers phosphorylation-mediated subnuclear localization shifting of PDX1. Involved in the regulation of eye size, lens formation and retinal lamination during late embryogenesis (By similarity).</text>
</comment>
<comment type="catalytic activity">
    <reaction evidence="6">
        <text>L-seryl-[protein] + ATP = O-phospho-L-seryl-[protein] + ADP + H(+)</text>
        <dbReference type="Rhea" id="RHEA:17989"/>
        <dbReference type="Rhea" id="RHEA-COMP:9863"/>
        <dbReference type="Rhea" id="RHEA-COMP:11604"/>
        <dbReference type="ChEBI" id="CHEBI:15378"/>
        <dbReference type="ChEBI" id="CHEBI:29999"/>
        <dbReference type="ChEBI" id="CHEBI:30616"/>
        <dbReference type="ChEBI" id="CHEBI:83421"/>
        <dbReference type="ChEBI" id="CHEBI:456216"/>
        <dbReference type="EC" id="2.7.11.1"/>
    </reaction>
</comment>
<comment type="catalytic activity">
    <reaction evidence="6">
        <text>L-threonyl-[protein] + ATP = O-phospho-L-threonyl-[protein] + ADP + H(+)</text>
        <dbReference type="Rhea" id="RHEA:46608"/>
        <dbReference type="Rhea" id="RHEA-COMP:11060"/>
        <dbReference type="Rhea" id="RHEA-COMP:11605"/>
        <dbReference type="ChEBI" id="CHEBI:15378"/>
        <dbReference type="ChEBI" id="CHEBI:30013"/>
        <dbReference type="ChEBI" id="CHEBI:30616"/>
        <dbReference type="ChEBI" id="CHEBI:61977"/>
        <dbReference type="ChEBI" id="CHEBI:456216"/>
        <dbReference type="EC" id="2.7.11.1"/>
    </reaction>
</comment>
<comment type="subunit">
    <text evidence="2 3">Interacts with CREB1, SIAH1, WSB1, CBX4, TRADD, p53/TP53, TP73, TP63, CREBBP, DAXX, P53DINP1, SKI, SMAD1, SMAD2 and SMAD3, but not SMAD4. Interacts with ATF1, PML, RUNX1, EP300, NKX1-2, NKX2-5, UBE2I, HMGA1, CTBP1, AXIN1, NLK, MYB, POU4F1, POU4F2, POU4F3, UBE2I, UBL1 and ZBTB4. Probably part of a complex consisting of p53/TP53, HIPK2 and AXIN1. Interacts with SP100; positively regulates TP53-dependent transcription (By similarity). Interacts with DAZAP2; the interaction results in phosphorylation of DAZAP2 which causes localization of DAZAP2 to the nucleus, reduces interaction of DAZAP2 with HIPK2 and prevents DAZAP2-dependent degradation of HIPK2 (By similarity). Interacts with SIAH1; the interaction is promoted by DAZAP2 and results in SIAH1-mediated ubiquitination and subsequent proteasomal degradation of HIPK2 (By similarity).</text>
</comment>
<comment type="subcellular location">
    <subcellularLocation>
        <location evidence="6 7 8">Nucleus</location>
        <location evidence="6 7 8">PML body</location>
    </subcellularLocation>
    <subcellularLocation>
        <location evidence="2">Cytoplasm</location>
    </subcellularLocation>
</comment>
<comment type="PTM">
    <text evidence="1">Autophosphorylation at Tyr-361 in the activation loop activates the kinase and promotes nuclear localization.</text>
</comment>
<comment type="PTM">
    <text evidence="1">Sumoylated. When conjugated it is directed to nuclear speckles. Desumoylated by SENP1. Sumoylation on Lys-32 is promoted by the E3 SUMO-protein ligase CBX4 (By similarity).</text>
</comment>
<comment type="PTM">
    <text evidence="2">Ubiquitinated by FBXO3, WSB1 and SIAH1, leading to rapid proteasome-dependent degradation. The degradation mediated by FBXO3, but not ubiquitination, is prevented in the presence of PML. The degradation mediated by WSB1 and SIAH1 is reversibly reduced upon DNA damage.</text>
</comment>
<comment type="PTM">
    <text>Cleaved at Asp-895 and Asp-956 by CASP6 in a p53/TP53-dependent manner. The cleaved form lacks the autoinhibitory C-terminal domain (AID), resulting in a hyperactive kinase, which potentiates p53/TP53 Ser-46 phosphorylation and subsequent activation of the cell death machinery.</text>
</comment>
<comment type="similarity">
    <text evidence="9">Belongs to the protein kinase superfamily. CMGC Ser/Thr protein kinase family. HIPK subfamily.</text>
</comment>
<sequence length="1168" mass="127641">MAPVYEGMASHVQVFSPHTLQSSAFCSVKKLKVEPSSNWDMTGYGSHSKLCSQSKNIPPSQPASTTVSTSLPIPNPSLPYEQTIIFPGSTGHIVVTSASSTSVTGQVLGGPHNLMRRSTVSLLDTYQKCGLKRKSEEIENTSSVQIIEEHPPMIQNNASGATVATATTSTATSKNSGSNSEGDYQLVQHEVLCSMTNTYEVLEFLGRGTFGQVVKCWKRGTNEIVAIKILKNHPSYARQGQIEVSILARLSTESADDYNFVRAYECFQHKNHTCLVFEMLEQNLYDFLKQNKFSPLPLKYIRPVLQQVATALMKLKSLGLIHADLKPENIMLVDPSRQPYRVKVIDFGSASHVSKAVCSTYLQSRYYRAPEIILGLPFCEAIDMWSLGCVIAELFLGWPLYPGASEYDQIRYISQTQGLPAEYLLSAGTKTTRFFNRDTDSPYPLWRLKTPDDHEAETGIKSKEARKYIFNCLDDMAQVSMTTDLEGSDMLVEKADRREFIDLLKKMLTIDADKRITPIETLNHPFVTMTHLLDFPHSTHVKSCFQNMEICKRRVNMYDTVNQSKTPFITHVAPSTSTNLTMTFNNQLTTVHNQPSAASMAAVAQRSMPLQTGTAQICARPDPFQQALIVCPPGFQGLQASPSKHAGYSVRMENAVPIVTQAPGAQPLQIQPGLLAQAWPGGAQQILLPPAWQQLTGVATHTSVQHAAVIPETMAGTQQLADWRNTHAHGSHYNPIMQQPTLLTGHVTLPAAQPLNVGVAHVMRQQPTSTTSSRKSKQHQPSMRNVSTCEVTSSQSTSSPQRSKRVKENTPPRCAMVHSSPACSTSVTCGWGDVASSTTRERQRQTIVIPDTPSPTVSVITISSDTDEEEEQKHAPTSTVSKQRKNVISCVTVHDSPYSDSSSNTSPYSVQQRTGHNGTNTLDTKGALENHCTGNPRTIIVPPLKTQASEVLVECDSLGPAVSTGHHSSSFKCKSSSTVTSTSGHSSGSSSGAIAYRQQRPGPHFQQQQPLNLSQAQPHMATDRTGSHRRQQAYITPTMAQAPYTFPHNSPSHGTVHPHLAAAAHLPTQPHLYTYTAPTALGSTGTVAHLVASQGSARHTVQHTAYPASIVHQVPVSMGPRVLPSPTIHPSQYPAQFAHQTYISASPASTVYTGYPLSPAKVNQYPYI</sequence>
<protein>
    <recommendedName>
        <fullName>Homeodomain-interacting protein kinase 2</fullName>
        <ecNumber evidence="6">2.7.11.1</ecNumber>
    </recommendedName>
    <alternativeName>
        <fullName>Mx-interacting protein kinase</fullName>
    </alternativeName>
    <alternativeName>
        <fullName>PKM</fullName>
    </alternativeName>
</protein>
<accession>Q9WUM7</accession>
<organism>
    <name type="scientific">Mesocricetus auratus</name>
    <name type="common">Golden hamster</name>
    <dbReference type="NCBI Taxonomy" id="10036"/>
    <lineage>
        <taxon>Eukaryota</taxon>
        <taxon>Metazoa</taxon>
        <taxon>Chordata</taxon>
        <taxon>Craniata</taxon>
        <taxon>Vertebrata</taxon>
        <taxon>Euteleostomi</taxon>
        <taxon>Mammalia</taxon>
        <taxon>Eutheria</taxon>
        <taxon>Euarchontoglires</taxon>
        <taxon>Glires</taxon>
        <taxon>Rodentia</taxon>
        <taxon>Myomorpha</taxon>
        <taxon>Muroidea</taxon>
        <taxon>Cricetidae</taxon>
        <taxon>Cricetinae</taxon>
        <taxon>Mesocricetus</taxon>
    </lineage>
</organism>
<name>HIPK2_MESAU</name>
<gene>
    <name type="primary">Hipk2</name>
</gene>
<reference key="1">
    <citation type="journal article" date="2000" name="J. Biol. Chem.">
        <title>Characterization of a novel serine/threonine kinase associated with nuclear bodies.</title>
        <authorList>
            <person name="Trost M."/>
            <person name="Kochs G."/>
            <person name="Haller O."/>
        </authorList>
    </citation>
    <scope>NUCLEOTIDE SEQUENCE [MRNA]</scope>
    <scope>CATALYTIC ACTIVITY</scope>
    <scope>AUTOPHOSPHORYLATION</scope>
    <scope>SUBCELLULAR LOCATION</scope>
    <scope>MUTAGENESIS OF LYS-228</scope>
</reference>
<reference key="2">
    <citation type="journal article" date="2003" name="Exp. Cell Res.">
        <title>The homeodomain-interacting kinase PKM (HIPK-2) modifies ND10 through both its kinase domain and a SUMO-1 interaction motif and alters the posttranslational modification of PML.</title>
        <authorList>
            <person name="Engelhardt O.G."/>
            <person name="Boutell C."/>
            <person name="Orr A."/>
            <person name="Ullrich E."/>
            <person name="Haller O."/>
            <person name="Everett R.D."/>
        </authorList>
    </citation>
    <scope>NUCLEOTIDE SEQUENCE [MRNA]</scope>
    <scope>SUBCELLULAR LOCATION</scope>
    <scope>INTERACTION WITH UBL1</scope>
    <scope>MUTAGENESIS OF LYS-228</scope>
    <scope>FUNCTION</scope>
</reference>
<reference key="3">
    <citation type="journal article" date="2002" name="J. Biol. Chem.">
        <title>Identification and characterization of HIPK2 interacting with p73 and modulating functions of the p53 family in vivo.</title>
        <authorList>
            <person name="Kim E.-J."/>
            <person name="Park J.-S."/>
            <person name="Um S.-J."/>
        </authorList>
    </citation>
    <scope>INTERACTION WITH TP73; TP53 AND TP63</scope>
    <scope>SUBCELLULAR LOCATION</scope>
    <scope>FUNCTION</scope>
</reference>
<dbReference type="EC" id="2.7.11.1" evidence="6"/>
<dbReference type="EMBL" id="AF144573">
    <property type="protein sequence ID" value="AAD31319.2"/>
    <property type="molecule type" value="mRNA"/>
</dbReference>
<dbReference type="RefSeq" id="NP_001268561.1">
    <property type="nucleotide sequence ID" value="NM_001281632.1"/>
</dbReference>
<dbReference type="SMR" id="Q9WUM7"/>
<dbReference type="STRING" id="10036.ENSMAUP00000010147"/>
<dbReference type="GeneID" id="101842840"/>
<dbReference type="KEGG" id="maua:101842840"/>
<dbReference type="CTD" id="28996"/>
<dbReference type="eggNOG" id="KOG0667">
    <property type="taxonomic scope" value="Eukaryota"/>
</dbReference>
<dbReference type="OrthoDB" id="9332038at2759"/>
<dbReference type="Proteomes" id="UP000189706">
    <property type="component" value="Unplaced"/>
</dbReference>
<dbReference type="GO" id="GO:0005737">
    <property type="term" value="C:cytoplasm"/>
    <property type="evidence" value="ECO:0000250"/>
    <property type="project" value="UniProtKB"/>
</dbReference>
<dbReference type="GO" id="GO:0010494">
    <property type="term" value="C:cytoplasmic stress granule"/>
    <property type="evidence" value="ECO:0000250"/>
    <property type="project" value="UniProtKB"/>
</dbReference>
<dbReference type="GO" id="GO:0016604">
    <property type="term" value="C:nuclear body"/>
    <property type="evidence" value="ECO:0000250"/>
    <property type="project" value="UniProtKB"/>
</dbReference>
<dbReference type="GO" id="GO:0005634">
    <property type="term" value="C:nucleus"/>
    <property type="evidence" value="ECO:0000250"/>
    <property type="project" value="UniProtKB"/>
</dbReference>
<dbReference type="GO" id="GO:0016605">
    <property type="term" value="C:PML body"/>
    <property type="evidence" value="ECO:0007669"/>
    <property type="project" value="UniProtKB-SubCell"/>
</dbReference>
<dbReference type="GO" id="GO:0005524">
    <property type="term" value="F:ATP binding"/>
    <property type="evidence" value="ECO:0007669"/>
    <property type="project" value="UniProtKB-KW"/>
</dbReference>
<dbReference type="GO" id="GO:0106310">
    <property type="term" value="F:protein serine kinase activity"/>
    <property type="evidence" value="ECO:0007669"/>
    <property type="project" value="RHEA"/>
</dbReference>
<dbReference type="GO" id="GO:0004674">
    <property type="term" value="F:protein serine/threonine kinase activity"/>
    <property type="evidence" value="ECO:0000250"/>
    <property type="project" value="UniProtKB"/>
</dbReference>
<dbReference type="GO" id="GO:0004713">
    <property type="term" value="F:protein tyrosine kinase activity"/>
    <property type="evidence" value="ECO:0007669"/>
    <property type="project" value="TreeGrafter"/>
</dbReference>
<dbReference type="GO" id="GO:0046332">
    <property type="term" value="F:SMAD binding"/>
    <property type="evidence" value="ECO:0007669"/>
    <property type="project" value="TreeGrafter"/>
</dbReference>
<dbReference type="GO" id="GO:0003713">
    <property type="term" value="F:transcription coactivator activity"/>
    <property type="evidence" value="ECO:0007669"/>
    <property type="project" value="TreeGrafter"/>
</dbReference>
<dbReference type="GO" id="GO:0003714">
    <property type="term" value="F:transcription corepressor activity"/>
    <property type="evidence" value="ECO:0007669"/>
    <property type="project" value="TreeGrafter"/>
</dbReference>
<dbReference type="GO" id="GO:0042771">
    <property type="term" value="P:intrinsic apoptotic signaling pathway in response to DNA damage by p53 class mediator"/>
    <property type="evidence" value="ECO:0007669"/>
    <property type="project" value="TreeGrafter"/>
</dbReference>
<dbReference type="GO" id="GO:0018105">
    <property type="term" value="P:peptidyl-serine phosphorylation"/>
    <property type="evidence" value="ECO:0000250"/>
    <property type="project" value="UniProtKB"/>
</dbReference>
<dbReference type="GO" id="GO:0045944">
    <property type="term" value="P:positive regulation of transcription by RNA polymerase II"/>
    <property type="evidence" value="ECO:0007669"/>
    <property type="project" value="TreeGrafter"/>
</dbReference>
<dbReference type="GO" id="GO:0007224">
    <property type="term" value="P:smoothened signaling pathway"/>
    <property type="evidence" value="ECO:0007669"/>
    <property type="project" value="TreeGrafter"/>
</dbReference>
<dbReference type="CDD" id="cd14227">
    <property type="entry name" value="STKc_HIPK2"/>
    <property type="match status" value="1"/>
</dbReference>
<dbReference type="FunFam" id="1.10.510.10:FF:000029">
    <property type="entry name" value="Homeodomain-interacting protein kinase 2 isoform 1"/>
    <property type="match status" value="1"/>
</dbReference>
<dbReference type="FunFam" id="3.30.200.20:FF:000022">
    <property type="entry name" value="Homeodomain-interacting protein kinase 2 isoform 1"/>
    <property type="match status" value="1"/>
</dbReference>
<dbReference type="Gene3D" id="3.30.200.20">
    <property type="entry name" value="Phosphorylase Kinase, domain 1"/>
    <property type="match status" value="1"/>
</dbReference>
<dbReference type="Gene3D" id="1.10.510.10">
    <property type="entry name" value="Transferase(Phosphotransferase) domain 1"/>
    <property type="match status" value="1"/>
</dbReference>
<dbReference type="InterPro" id="IPR011009">
    <property type="entry name" value="Kinase-like_dom_sf"/>
</dbReference>
<dbReference type="InterPro" id="IPR000719">
    <property type="entry name" value="Prot_kinase_dom"/>
</dbReference>
<dbReference type="InterPro" id="IPR017441">
    <property type="entry name" value="Protein_kinase_ATP_BS"/>
</dbReference>
<dbReference type="InterPro" id="IPR008271">
    <property type="entry name" value="Ser/Thr_kinase_AS"/>
</dbReference>
<dbReference type="InterPro" id="IPR050494">
    <property type="entry name" value="Ser_Thr_dual-spec_kinase"/>
</dbReference>
<dbReference type="PANTHER" id="PTHR24058">
    <property type="entry name" value="DUAL SPECIFICITY PROTEIN KINASE"/>
    <property type="match status" value="1"/>
</dbReference>
<dbReference type="PANTHER" id="PTHR24058:SF53">
    <property type="entry name" value="HOMEODOMAIN-INTERACTING PROTEIN KINASE 2"/>
    <property type="match status" value="1"/>
</dbReference>
<dbReference type="Pfam" id="PF00069">
    <property type="entry name" value="Pkinase"/>
    <property type="match status" value="1"/>
</dbReference>
<dbReference type="SMART" id="SM00220">
    <property type="entry name" value="S_TKc"/>
    <property type="match status" value="1"/>
</dbReference>
<dbReference type="SUPFAM" id="SSF56112">
    <property type="entry name" value="Protein kinase-like (PK-like)"/>
    <property type="match status" value="1"/>
</dbReference>
<dbReference type="PROSITE" id="PS00107">
    <property type="entry name" value="PROTEIN_KINASE_ATP"/>
    <property type="match status" value="1"/>
</dbReference>
<dbReference type="PROSITE" id="PS50011">
    <property type="entry name" value="PROTEIN_KINASE_DOM"/>
    <property type="match status" value="1"/>
</dbReference>
<dbReference type="PROSITE" id="PS00108">
    <property type="entry name" value="PROTEIN_KINASE_ST"/>
    <property type="match status" value="1"/>
</dbReference>